<name>RAD50_HUMAN</name>
<sequence>MSRIEKMSILGVRSFGIEDKDKQIITFFSPLTILVGPNGAGKTTIIECLKYICTGDFPPGTKGNTFVHDPKVAQETDVRAQIRLQFRDVNGELIAVQRSMVCTQKSKKTEFKTLEGVITRTKHGEKVSLSSKCAEIDREMISSLGVSKAVLNNVIFCHQEDSNWPLSEGKALKQKFDEIFSATRYIKALETLRQVRQTQGQKVKEYQMELKYLKQYKEKACEIRDQITSKEAQLTSSKEIVKSYENELDPLKNRLKEIEHNLSKIMKLDNEIKALDSRKKQMEKDNSELEEKMEKVFQGTDEQLNDLYHNHQRTVREKERKLVDCHRELEKLNKESRLLNQEKSELLVEQGRLQLQADRHQEHIRARDSLIQSLATQLELDGFERGPFSERQIKNFHKLVRERQEGEAKTANQLMNDFAEKETLKQKQIDEIRDKKTGLGRIIELKSEILSKKQNELKNVKYELQQLEGSSDRILELDQELIKAERELSKAEKNSNVETLKMEVISLQNEKADLDRTLRKLDQEMEQLNHHTTTRTQMEMLTKDKADKDEQIRKIKSRHSDELTSLLGYFPNKKQLEDWLHSKSKEINQTRDRLAKLNKELASSEQNKNHINNELKRKEEQLSSYEDKLFDVCGSQDFESDLDRLKEEIEKSSKQRAMLAGATAVYSQFITQLTDENQSCCPVCQRVFQTEAELQEVISDLQSKLRLAPDKLKSTESELKKKEKRRDEMLGLVPMRQSIIDLKEKEIPELRNKLQNVNRDIQRLKNDIEEQETLLGTIMPEEESAKVCLTDVTIMERFQMELKDVERKIAQQAAKLQGIDLDRTVQQVNQEKQEKQHKLDTVSSKIELNRKLIQDQQEQIQHLKSTTNELKSEKLQISTNLQRRQQLEEQTVELSTEVQSLYREIKDAKEQVSPLETTLEKFQQEKEELINKKNTSNKIAQDKLNDIKEKVKNIHGYMKDIENYIQDGKDDYKKQKETELNKVIAQLSECEKHKEKINEDMRLMRQDIDTQKIQERWLQDNLTLRKRNEELKEVEEERKQHLKEMGQMQVLQMKSEHQKLEENIDNIKRNHNLALGRQKGYEEEIIHFKKELREPQFRDAEEKYREMMIVMRTTELVNKDLDIYYKTLDQAIMKFHSMKMEEINKIIRDLWRSTYRGQDIEYIEIRSDADENVSASDKRRNYNYRVVMLKGDTALDMRGRCSAGQKVLASLIIRLALAETFCLNCGIIALDEPTTNLDRENIESLAHALVEIIKSRSQQRNFQLLVITHDEDFVELLGRSEYVEKFYRIKKNIDQCSEIVKCSVSSLGFNVH</sequence>
<keyword id="KW-0002">3D-structure</keyword>
<keyword id="KW-0007">Acetylation</keyword>
<keyword id="KW-0025">Alternative splicing</keyword>
<keyword id="KW-0067">ATP-binding</keyword>
<keyword id="KW-0131">Cell cycle</keyword>
<keyword id="KW-0158">Chromosome</keyword>
<keyword id="KW-0175">Coiled coil</keyword>
<keyword id="KW-0227">DNA damage</keyword>
<keyword id="KW-0234">DNA repair</keyword>
<keyword id="KW-0945">Host-virus interaction</keyword>
<keyword id="KW-0378">Hydrolase</keyword>
<keyword id="KW-0460">Magnesium</keyword>
<keyword id="KW-0469">Meiosis</keyword>
<keyword id="KW-0479">Metal-binding</keyword>
<keyword id="KW-0547">Nucleotide-binding</keyword>
<keyword id="KW-0539">Nucleus</keyword>
<keyword id="KW-0597">Phosphoprotein</keyword>
<keyword id="KW-1267">Proteomics identification</keyword>
<keyword id="KW-1185">Reference proteome</keyword>
<keyword id="KW-0779">Telomere</keyword>
<keyword id="KW-0862">Zinc</keyword>
<proteinExistence type="evidence at protein level"/>
<accession>Q92878</accession>
<accession>B9EGF5</accession>
<accession>O43254</accession>
<accession>Q6GMT7</accession>
<accession>Q6P5X3</accession>
<accession>Q9UP86</accession>
<comment type="function">
    <text evidence="4 10 12 13 15 18 20 23 26 27 28 30 34 35 36">Component of the MRN complex, which plays a central role in double-strand break (DSB) repair, DNA recombination, maintenance of telomere integrity and meiosis (PubMed:15064416, PubMed:21757780, PubMed:27889449, PubMed:28134932, PubMed:28867292, PubMed:9590181, PubMed:9651580, PubMed:9705271). The MRN complex is involved in the repair of DNA double-strand breaks (DSBs) via homologous recombination (HR), an error-free mechanism which primarily occurs during S and G2 phases (PubMed:15064416, PubMed:21757780, PubMed:27889449, PubMed:28867292, PubMed:9590181, PubMed:9651580, PubMed:9705271). The complex (1) mediates the end resection of damaged DNA, which generates proper single-stranded DNA, a key initial steps in HR, and is (2) required for the recruitment of other repair factors and efficient activation of ATM and ATR upon DNA damage (PubMed:15064416, PubMed:27889449, PubMed:28867292, PubMed:9590181, PubMed:9651580, PubMed:9705271). The MRN complex possesses single-strand endonuclease activity and double-strand-specific 3'-5' exonuclease activity, which are provided by MRE11, to initiate end resection, which is required for single-strand invasion and recombination (PubMed:11741547, PubMed:9590181, PubMed:9651580, PubMed:9705271). Within the complex, RAD50 is both required to bind DNA ends and hold them in close proximity and regulate the activity of MRE11 (PubMed:11741547, PubMed:12805565, PubMed:28134932). RAD50 provides an ATP-dependent control of MRE11 by positioning DNA ends into the MRE11 active site: ATP-binding induces a large structural change from an open form with accessible MRE11 nuclease sites into a closed form (By similarity). The MRN complex is also required for DNA damage signaling via activation of the ATM and ATR kinases: the nuclease activity of MRE11 is not required to activate ATM and ATR (PubMed:15064416, PubMed:15790808, PubMed:16622404). The MRN complex is also required for the processing of R-loops (PubMed:31537797). In telomeres the MRN complex may modulate t-loop formation (PubMed:10888888).</text>
</comment>
<comment type="catalytic activity">
    <reaction evidence="26 35 43">
        <text>ATP + H2O = ADP + phosphate + H(+)</text>
        <dbReference type="Rhea" id="RHEA:13065"/>
        <dbReference type="ChEBI" id="CHEBI:15377"/>
        <dbReference type="ChEBI" id="CHEBI:15378"/>
        <dbReference type="ChEBI" id="CHEBI:30616"/>
        <dbReference type="ChEBI" id="CHEBI:43474"/>
        <dbReference type="ChEBI" id="CHEBI:456216"/>
    </reaction>
</comment>
<comment type="cofactor">
    <cofactor evidence="27">
        <name>Zn(2+)</name>
        <dbReference type="ChEBI" id="CHEBI:29105"/>
    </cofactor>
    <text evidence="27">Binds 1 zinc ion per homodimer.</text>
</comment>
<comment type="subunit">
    <text evidence="3 7 8 9 10 11 16 17 24 25 28 29 32 33 34 36">Component of the MRN complex composed of two heterodimers RAD50 and MRE11 associated with a single NBN (PubMed:10839544, PubMed:26215093, PubMed:28867292, PubMed:36577401, PubMed:8756642, PubMed:9590181, PubMed:9705271). The MRN complexes dimerize on DNA to form joined MRN-MRN oligomers required for DNA double-strand break repair (PubMed:36577401). As part of the MRN complex, interacts with MCM8 and MCM9; the interaction recruits the complex to DNA repair sites (PubMed:26215093). Component of the BASC complex, at least composed of BRCA1, MSH2, MSH6, MLH1, ATM, BLM, RAD50, MRE11 and NBN (PubMed:10783165). Found in a complex with TERF2 (PubMed:10888888). Interacts with RINT1 (PubMed:11096100). Interacts with BRCA1 via its N-terminal domain (PubMed:10426999). Interacts with DCLRE1C/Artemis (PubMed:15456891, PubMed:15723659). Interacts with MRNIP (PubMed:27568553). Interacts with CYREN (via XLF motif) (By similarity). Interacts with C1QBP and MRE11; interaction takes place in absence of DNA damage to form the MRC (MRE11-RAD50-C1QBP) complex that inhibits the activity of MRE11 (PubMed:31353207).</text>
</comment>
<comment type="subunit">
    <text evidence="22">(Microbial infection) Interacts with herpes simplex virus 1 protein UL12 (PubMed:20943970).</text>
</comment>
<comment type="interaction">
    <interactant intactId="EBI-495494">
        <id>Q92878</id>
    </interactant>
    <interactant intactId="EBI-396461">
        <id>P46100</id>
        <label>ATRX</label>
    </interactant>
    <organismsDiffer>false</organismsDiffer>
    <experiments>5</experiments>
</comment>
<comment type="interaction">
    <interactant intactId="EBI-495494">
        <id>Q92878</id>
    </interactant>
    <interactant intactId="EBI-968231">
        <id>O75943</id>
        <label>RAD17</label>
    </interactant>
    <organismsDiffer>false</organismsDiffer>
    <experiments>2</experiments>
</comment>
<comment type="interaction">
    <interactant intactId="EBI-495494">
        <id>Q92878</id>
    </interactant>
    <interactant intactId="EBI-495494">
        <id>Q92878</id>
        <label>RAD50</label>
    </interactant>
    <organismsDiffer>false</organismsDiffer>
    <experiments>5</experiments>
</comment>
<comment type="subcellular location">
    <subcellularLocation>
        <location evidence="8 19 24">Nucleus</location>
    </subcellularLocation>
    <subcellularLocation>
        <location evidence="10">Chromosome</location>
        <location evidence="10">Telomere</location>
    </subcellularLocation>
    <subcellularLocation>
        <location evidence="23 24">Chromosome</location>
    </subcellularLocation>
    <text evidence="8 19 23 24">Localizes to discrete nuclear foci after treatment with genotoxic agents (PubMed:10783165, PubMed:26215093). Localizes to DNA double-strand breaks (DSBs) (PubMed:15916964, PubMed:21757780).</text>
</comment>
<comment type="alternative products">
    <event type="alternative splicing"/>
    <isoform>
        <id>Q92878-1</id>
        <name>1</name>
        <name>RAD50-1</name>
        <name>RAD50-2</name>
        <sequence type="displayed"/>
    </isoform>
    <isoform>
        <id>Q92878-2</id>
        <name>2</name>
        <sequence type="described" ref="VSP_012591"/>
    </isoform>
    <isoform>
        <id>Q92878-3</id>
        <name>3</name>
        <name>RAD50-3</name>
        <sequence type="described" ref="VSP_012590"/>
    </isoform>
</comment>
<comment type="tissue specificity">
    <text evidence="33">Expressed at very low level in most tissues, except in testis where it is expressed at higher level. Expressed in fibroblasts.</text>
</comment>
<comment type="domain">
    <text evidence="2">The zinc-hook, which separates the large intramolecular coiled coil regions, contains 2 Cys residues that coordinate one molecule of zinc with the help of the 2 Cys residues of the zinc-hook of another RAD50 molecule, thereby forming a V-shaped homodimer. The two heads of the homodimer, which constitute the ATP-binding domain, interact with the MRE11 homodimer.</text>
</comment>
<comment type="PTM">
    <text evidence="23">Phosphorylation at Ser-635 by ATM in response to DNA damage is required for double-strand break (DSB) repair.</text>
</comment>
<comment type="disease" evidence="21 31">
    <disease id="DI-02806">
        <name>Nijmegen breakage syndrome-like disorder</name>
        <acronym>NBSLD</acronym>
        <description>A disorder similar to Nijmegen breakage syndrome and characterized by chromosomal instability, radiation sensitivity, microcephaly, growth retardation, short stature and bird-like face. Immunodeficiency is absent.</description>
        <dbReference type="MIM" id="613078"/>
    </disease>
    <text>The disease is caused by variants affecting the gene represented in this entry.</text>
</comment>
<comment type="similarity">
    <text evidence="42">Belongs to the SMC family. RAD50 subfamily.</text>
</comment>
<comment type="sequence caution" evidence="42">
    <conflict type="miscellaneous discrepancy">
        <sequence resource="EMBL-CDS" id="AAH62603"/>
    </conflict>
    <text>Contaminating sequence. Potential poly-A sequence.</text>
</comment>
<reference key="1">
    <citation type="journal article" date="1996" name="Mol. Cell. Biol.">
        <title>Human Rad50 is physically associated with human Mre11: identification of a conserved multiprotein complex implicated in recombinational DNA repair.</title>
        <authorList>
            <person name="Dolganov G.M."/>
            <person name="Maser R.S."/>
            <person name="Novikov A."/>
            <person name="Tosto L."/>
            <person name="Chong S."/>
            <person name="Bressan D.A."/>
            <person name="Petrini J.H.J."/>
        </authorList>
    </citation>
    <scope>NUCLEOTIDE SEQUENCE [MRNA] (ISOFORM 1)</scope>
    <scope>INTERACTION WITH MRE11</scope>
    <scope>TISSUE SPECIFICITY</scope>
</reference>
<reference key="2">
    <citation type="journal article" date="1999" name="Gene">
        <title>Molecular cloning and characterization of splice variants of human RAD50 gene.</title>
        <authorList>
            <person name="Kim K.K."/>
            <person name="Shin B.A."/>
            <person name="Seo K.H."/>
            <person name="Kim P.N."/>
            <person name="Koh J.T."/>
            <person name="Kim J.H."/>
            <person name="Park B.R."/>
        </authorList>
    </citation>
    <scope>NUCLEOTIDE SEQUENCE [MRNA] (ISOFORMS 1 AND 3)</scope>
</reference>
<reference key="3">
    <citation type="submission" date="1996-07" db="EMBL/GenBank/DDBJ databases">
        <authorList>
            <person name="Offenberg H.H."/>
        </authorList>
    </citation>
    <scope>NUCLEOTIDE SEQUENCE [MRNA] (ISOFORM 2)</scope>
    <scope>VARIANTS GLU-616; ALA-697; HIS-964 AND MET-973</scope>
    <source>
        <tissue>Testis</tissue>
    </source>
</reference>
<reference key="4">
    <citation type="journal article" date="2004" name="Nature">
        <title>The DNA sequence and comparative analysis of human chromosome 5.</title>
        <authorList>
            <person name="Schmutz J."/>
            <person name="Martin J."/>
            <person name="Terry A."/>
            <person name="Couronne O."/>
            <person name="Grimwood J."/>
            <person name="Lowry S."/>
            <person name="Gordon L.A."/>
            <person name="Scott D."/>
            <person name="Xie G."/>
            <person name="Huang W."/>
            <person name="Hellsten U."/>
            <person name="Tran-Gyamfi M."/>
            <person name="She X."/>
            <person name="Prabhakar S."/>
            <person name="Aerts A."/>
            <person name="Altherr M."/>
            <person name="Bajorek E."/>
            <person name="Black S."/>
            <person name="Branscomb E."/>
            <person name="Caoile C."/>
            <person name="Challacombe J.F."/>
            <person name="Chan Y.M."/>
            <person name="Denys M."/>
            <person name="Detter J.C."/>
            <person name="Escobar J."/>
            <person name="Flowers D."/>
            <person name="Fotopulos D."/>
            <person name="Glavina T."/>
            <person name="Gomez M."/>
            <person name="Gonzales E."/>
            <person name="Goodstein D."/>
            <person name="Grigoriev I."/>
            <person name="Groza M."/>
            <person name="Hammon N."/>
            <person name="Hawkins T."/>
            <person name="Haydu L."/>
            <person name="Israni S."/>
            <person name="Jett J."/>
            <person name="Kadner K."/>
            <person name="Kimball H."/>
            <person name="Kobayashi A."/>
            <person name="Lopez F."/>
            <person name="Lou Y."/>
            <person name="Martinez D."/>
            <person name="Medina C."/>
            <person name="Morgan J."/>
            <person name="Nandkeshwar R."/>
            <person name="Noonan J.P."/>
            <person name="Pitluck S."/>
            <person name="Pollard M."/>
            <person name="Predki P."/>
            <person name="Priest J."/>
            <person name="Ramirez L."/>
            <person name="Retterer J."/>
            <person name="Rodriguez A."/>
            <person name="Rogers S."/>
            <person name="Salamov A."/>
            <person name="Salazar A."/>
            <person name="Thayer N."/>
            <person name="Tice H."/>
            <person name="Tsai M."/>
            <person name="Ustaszewska A."/>
            <person name="Vo N."/>
            <person name="Wheeler J."/>
            <person name="Wu K."/>
            <person name="Yang J."/>
            <person name="Dickson M."/>
            <person name="Cheng J.-F."/>
            <person name="Eichler E.E."/>
            <person name="Olsen A."/>
            <person name="Pennacchio L.A."/>
            <person name="Rokhsar D.S."/>
            <person name="Richardson P."/>
            <person name="Lucas S.M."/>
            <person name="Myers R.M."/>
            <person name="Rubin E.M."/>
        </authorList>
    </citation>
    <scope>NUCLEOTIDE SEQUENCE [LARGE SCALE GENOMIC DNA]</scope>
</reference>
<reference key="5">
    <citation type="submission" date="2005-09" db="EMBL/GenBank/DDBJ databases">
        <authorList>
            <person name="Mural R.J."/>
            <person name="Istrail S."/>
            <person name="Sutton G.G."/>
            <person name="Florea L."/>
            <person name="Halpern A.L."/>
            <person name="Mobarry C.M."/>
            <person name="Lippert R."/>
            <person name="Walenz B."/>
            <person name="Shatkay H."/>
            <person name="Dew I."/>
            <person name="Miller J.R."/>
            <person name="Flanigan M.J."/>
            <person name="Edwards N.J."/>
            <person name="Bolanos R."/>
            <person name="Fasulo D."/>
            <person name="Halldorsson B.V."/>
            <person name="Hannenhalli S."/>
            <person name="Turner R."/>
            <person name="Yooseph S."/>
            <person name="Lu F."/>
            <person name="Nusskern D.R."/>
            <person name="Shue B.C."/>
            <person name="Zheng X.H."/>
            <person name="Zhong F."/>
            <person name="Delcher A.L."/>
            <person name="Huson D.H."/>
            <person name="Kravitz S.A."/>
            <person name="Mouchard L."/>
            <person name="Reinert K."/>
            <person name="Remington K.A."/>
            <person name="Clark A.G."/>
            <person name="Waterman M.S."/>
            <person name="Eichler E.E."/>
            <person name="Adams M.D."/>
            <person name="Hunkapiller M.W."/>
            <person name="Myers E.W."/>
            <person name="Venter J.C."/>
        </authorList>
    </citation>
    <scope>NUCLEOTIDE SEQUENCE [LARGE SCALE GENOMIC DNA]</scope>
</reference>
<reference key="6">
    <citation type="journal article" date="2004" name="Genome Res.">
        <title>The status, quality, and expansion of the NIH full-length cDNA project: the Mammalian Gene Collection (MGC).</title>
        <authorList>
            <consortium name="The MGC Project Team"/>
        </authorList>
    </citation>
    <scope>NUCLEOTIDE SEQUENCE [LARGE SCALE MRNA] (ISOFORM 1)</scope>
    <source>
        <tissue>Lymph</tissue>
    </source>
</reference>
<reference key="7">
    <citation type="journal article" date="1998" name="Cell">
        <title>The hMre11/hRad50 protein complex and Nijmegen breakage syndrome: linkage of double-strand break repair to the cellular DNA damage response.</title>
        <authorList>
            <person name="Carney J.P."/>
            <person name="Maser R.S."/>
            <person name="Olivares H."/>
            <person name="Davis E.M."/>
            <person name="Le Beau M."/>
            <person name="Yates J.R. III"/>
            <person name="Hays L."/>
            <person name="Morgan W.F."/>
            <person name="Petrini J.H.J."/>
        </authorList>
    </citation>
    <scope>FUNCTION IN DSB REPAIR</scope>
    <scope>IDENTIFICATION IN THE MRN COMPLEX WITH MRE11 AND NBN</scope>
</reference>
<reference key="8">
    <citation type="journal article" date="1998" name="J. Biol. Chem.">
        <title>Nuclease activities in a complex of human recombination and DNA repair factors Rad50, Mre11, and p95.</title>
        <authorList>
            <person name="Trujillo K.M."/>
            <person name="Yuan S.-S.F."/>
            <person name="Lee E.Y.-H.P."/>
            <person name="Sung P."/>
        </authorList>
    </citation>
    <scope>FUNCTION IN DSB REPAIR</scope>
    <scope>IDENTIFICATION IN THE MRN COMPLEX WITH MRE11 AND NBN</scope>
</reference>
<reference key="9">
    <citation type="journal article" date="1998" name="Mol. Cell">
        <title>The 3' to 5' exonuclease activity of Mre 11 facilitates repair of DNA double-strand breaks.</title>
        <authorList>
            <person name="Paull T.T."/>
            <person name="Gellert M."/>
        </authorList>
    </citation>
    <scope>FUNCTION</scope>
    <scope>CATALYTIC ACTIVITY</scope>
    <scope>ATP-BINDING</scope>
    <scope>MUTAGENESIS OF LYS-42 AND ASP-1231</scope>
</reference>
<reference key="10">
    <citation type="journal article" date="1999" name="Science">
        <title>Association of BRCA1 with the hRad50-hMre11-p95 complex and the DNA damage response.</title>
        <authorList>
            <person name="Zhong Q."/>
            <person name="Chen C.-F."/>
            <person name="Li S."/>
            <person name="Chen Y."/>
            <person name="Wang C.-C."/>
            <person name="Xiao J."/>
            <person name="Chen P.-L."/>
            <person name="Sharp Z.D."/>
            <person name="Lee W.-H."/>
        </authorList>
    </citation>
    <scope>SUBCELLULAR LOCATION</scope>
    <scope>INTERACTION WITH BRCA1</scope>
</reference>
<reference key="11">
    <citation type="journal article" date="2000" name="Genes Dev.">
        <title>BASC, a super complex of BRCA1-associated proteins involved in the recognition and repair of aberrant DNA structures.</title>
        <authorList>
            <person name="Wang Y."/>
            <person name="Cortez D."/>
            <person name="Yazdi P."/>
            <person name="Neff N."/>
            <person name="Elledge S.J."/>
            <person name="Qin J."/>
        </authorList>
    </citation>
    <scope>SUBCELLULAR LOCATION</scope>
    <scope>IDENTIFICATION IN THE BASC COMPLEX WITH BRCA1; MSH2; MSH6; MLH1; ATM; BLM; MRE11 AND NBN</scope>
</reference>
<reference key="12">
    <citation type="journal article" date="2000" name="Nature">
        <title>Functional link between ataxia-telangiectasia and Nijmegen breakage syndrome gene products.</title>
        <authorList>
            <person name="Zhao S."/>
            <person name="Weng Y.-C."/>
            <person name="Yuan S.-S.F."/>
            <person name="Lin Y.-T."/>
            <person name="Hsu H.-C."/>
            <person name="Lin S.-C."/>
            <person name="Gerbino E."/>
            <person name="Song M.-H."/>
            <person name="Zdzienicka M.Z."/>
            <person name="Gatti R.A."/>
            <person name="Shay J.W."/>
            <person name="Ziv Y."/>
            <person name="Shiloh Y."/>
            <person name="Lee E.Y.-H.P."/>
        </authorList>
    </citation>
    <scope>IDENTIFICATION IN THE MRN COMPLEX WITH MRE11 AND NBN</scope>
</reference>
<reference key="13">
    <citation type="journal article" date="2000" name="Nat. Genet.">
        <title>Cell-cycle-regulated association of RAD50/MRE11/NBS1 with TRF2 and human telomeres.</title>
        <authorList>
            <person name="Zhu X.-D."/>
            <person name="Kuester B."/>
            <person name="Mann M."/>
            <person name="Petrini J.H.J."/>
            <person name="de Lange T."/>
        </authorList>
    </citation>
    <scope>FUNCTION IN TELOMERES</scope>
    <scope>IDENTIFICATION BY MASS SPECTROMETRY</scope>
    <scope>IDENTIFICATION IN THE A COMPLEX WITH TERF2</scope>
    <scope>SUBCELLULAR LOCATION</scope>
</reference>
<reference key="14">
    <citation type="journal article" date="2001" name="J. Biol. Chem.">
        <title>RINT-1, a novel Rad50-interacting protein, participates in radiation-induced G2/M checkpoint control.</title>
        <authorList>
            <person name="Xiao J."/>
            <person name="Liu C.-C."/>
            <person name="Chen P.-L."/>
            <person name="Lee W.-H."/>
        </authorList>
    </citation>
    <scope>INTERACTION WITH RINT1</scope>
</reference>
<reference key="15">
    <citation type="journal article" date="2001" name="Mol. Cell">
        <title>Human Rad50/Mre11 is a flexible complex that can tether DNA ends.</title>
        <authorList>
            <person name="de Jager M."/>
            <person name="van Noort J."/>
            <person name="van Gent D.C."/>
            <person name="Dekker C."/>
            <person name="Kanaar R."/>
            <person name="Wyman C."/>
        </authorList>
    </citation>
    <scope>FUNCTION</scope>
    <scope>INTRAMOLECULAR COILED-COIL DOMAINS</scope>
</reference>
<reference key="16">
    <citation type="journal article" date="2002" name="Nucleic Acids Res.">
        <title>DNA end-binding specificity of human Rad50/Mre11 is influenced by ATP.</title>
        <authorList>
            <person name="de Jager M."/>
            <person name="Wyman C."/>
            <person name="van Gent D.C."/>
            <person name="Kanaar R."/>
        </authorList>
    </citation>
    <scope>ATP-BINDING</scope>
</reference>
<reference key="17">
    <citation type="journal article" date="2003" name="Proc. Natl. Acad. Sci. U.S.A.">
        <title>The coiled-coil of the human Rad50 DNA repair protein contains specific segments of increased flexibility.</title>
        <authorList>
            <person name="van Noort J."/>
            <person name="van Der Heijden T."/>
            <person name="de Jager M."/>
            <person name="Wyman C."/>
            <person name="Kanaar R."/>
            <person name="Dekker C."/>
        </authorList>
    </citation>
    <scope>FUNCTION</scope>
</reference>
<reference key="18">
    <citation type="journal article" date="2004" name="Mol. Cell. Biol.">
        <title>Artemis is a phosphorylation target of ATM and ATR and is involved in the G2/M DNA damage checkpoint response.</title>
        <authorList>
            <person name="Zhang X."/>
            <person name="Succi J."/>
            <person name="Feng Z."/>
            <person name="Prithivirajsingh S."/>
            <person name="Story M.D."/>
            <person name="Legerski R.J."/>
        </authorList>
    </citation>
    <scope>INTERACTION WITH DCLRE1C</scope>
</reference>
<reference key="19">
    <citation type="journal article" date="2004" name="Science">
        <title>Direct activation of the ATM protein kinase by the Mre11/Rad50/Nbs1 complex.</title>
        <authorList>
            <person name="Lee J.-H."/>
            <person name="Paull T.T."/>
        </authorList>
    </citation>
    <scope>FUNCTION IN ATM ACTIVATION</scope>
</reference>
<reference key="20">
    <citation type="journal article" date="2005" name="Cancer Sci.">
        <title>Ataxia-telangiectasia-mutated dependent phosphorylation of Artemis in response to DNA damage.</title>
        <authorList>
            <person name="Chen L."/>
            <person name="Morio T."/>
            <person name="Minegishi Y."/>
            <person name="Nakada S."/>
            <person name="Nagasawa M."/>
            <person name="Komatsu K."/>
            <person name="Chessa L."/>
            <person name="Villa A."/>
            <person name="Lecis D."/>
            <person name="Delia D."/>
            <person name="Mizutani S."/>
        </authorList>
    </citation>
    <scope>INTERACTION WITH DCLRE1C</scope>
</reference>
<reference key="21">
    <citation type="journal article" date="2005" name="Mol. Cell">
        <title>ATM-dependent phosphorylation of ATF2 is required for the DNA damage response.</title>
        <authorList>
            <person name="Bhoumik A."/>
            <person name="Takahashi S."/>
            <person name="Breitweiser W."/>
            <person name="Shiloh Y."/>
            <person name="Jones N."/>
            <person name="Ronai Z."/>
        </authorList>
    </citation>
    <scope>SUBCELLULAR LOCATION</scope>
</reference>
<reference key="22">
    <citation type="journal article" date="2005" name="Science">
        <title>ATM activation by DNA double-strand breaks through the Mre11-Rad50-Nbs1 complex.</title>
        <authorList>
            <person name="Lee J.H."/>
            <person name="Paull T.T."/>
        </authorList>
    </citation>
    <scope>FUNCTION IN ATM ACTIVATION</scope>
    <scope>CATALYTIC ACTIVITY</scope>
    <scope>MUTAGENESIS OF SER-1202</scope>
</reference>
<reference key="23">
    <citation type="journal article" date="2006" name="Nat. Struct. Mol. Biol.">
        <title>Two-step activation of ATM by DNA and the Mre11-Rad50-Nbs1 complex.</title>
        <authorList>
            <person name="Dupre A."/>
            <person name="Boyer-Chatenet L."/>
            <person name="Gautier J."/>
        </authorList>
    </citation>
    <scope>FUNCTION IN ATM ACTIVATION</scope>
    <scope>MUTAGENESIS OF SER-1202</scope>
</reference>
<reference key="24">
    <citation type="journal article" date="2007" name="Science">
        <title>ATM and ATR substrate analysis reveals extensive protein networks responsive to DNA damage.</title>
        <authorList>
            <person name="Matsuoka S."/>
            <person name="Ballif B.A."/>
            <person name="Smogorzewska A."/>
            <person name="McDonald E.R. III"/>
            <person name="Hurov K.E."/>
            <person name="Luo J."/>
            <person name="Bakalarski C.E."/>
            <person name="Zhao Z."/>
            <person name="Solimini N."/>
            <person name="Lerenthal Y."/>
            <person name="Shiloh Y."/>
            <person name="Gygi S.P."/>
            <person name="Elledge S.J."/>
        </authorList>
    </citation>
    <scope>PHOSPHORYLATION [LARGE SCALE ANALYSIS] AT SER-635</scope>
    <scope>IDENTIFICATION BY MASS SPECTROMETRY [LARGE SCALE ANALYSIS]</scope>
    <source>
        <tissue>Embryonic kidney</tissue>
    </source>
</reference>
<reference key="25">
    <citation type="journal article" date="2008" name="Proc. Natl. Acad. Sci. U.S.A.">
        <title>A quantitative atlas of mitotic phosphorylation.</title>
        <authorList>
            <person name="Dephoure N."/>
            <person name="Zhou C."/>
            <person name="Villen J."/>
            <person name="Beausoleil S.A."/>
            <person name="Bakalarski C.E."/>
            <person name="Elledge S.J."/>
            <person name="Gygi S.P."/>
        </authorList>
    </citation>
    <scope>PHOSPHORYLATION [LARGE SCALE ANALYSIS] AT SER-635 AND THR-690</scope>
    <scope>IDENTIFICATION BY MASS SPECTROMETRY [LARGE SCALE ANALYSIS]</scope>
    <source>
        <tissue>Cervix carcinoma</tissue>
    </source>
</reference>
<reference key="26">
    <citation type="journal article" date="2009" name="Am. J. Hum. Genet.">
        <title>Human RAD50 deficiency in a Nijmegen breakage syndrome-like disorder.</title>
        <authorList>
            <person name="Waltes R."/>
            <person name="Kalb R."/>
            <person name="Gatei M."/>
            <person name="Kijas A.W."/>
            <person name="Stumm M."/>
            <person name="Sobeck A."/>
            <person name="Wieland B."/>
            <person name="Varon R."/>
            <person name="Lerenthal Y."/>
            <person name="Lavin M.F."/>
            <person name="Schindler D."/>
            <person name="Doerk T."/>
        </authorList>
    </citation>
    <scope>INVOLVEMENT IN NBSLD</scope>
    <scope>VARIANT NBSLD 1093-ARG--HIS-1312 DEL</scope>
</reference>
<reference key="27">
    <citation type="journal article" date="2009" name="Sci. Signal.">
        <title>Quantitative phosphoproteomic analysis of T cell receptor signaling reveals system-wide modulation of protein-protein interactions.</title>
        <authorList>
            <person name="Mayya V."/>
            <person name="Lundgren D.H."/>
            <person name="Hwang S.-I."/>
            <person name="Rezaul K."/>
            <person name="Wu L."/>
            <person name="Eng J.K."/>
            <person name="Rodionov V."/>
            <person name="Han D.K."/>
        </authorList>
    </citation>
    <scope>PHOSPHORYLATION [LARGE SCALE ANALYSIS] AT THR-690</scope>
    <scope>IDENTIFICATION BY MASS SPECTROMETRY [LARGE SCALE ANALYSIS]</scope>
    <source>
        <tissue>Leukemic T-cell</tissue>
    </source>
</reference>
<reference key="28">
    <citation type="journal article" date="2009" name="Science">
        <title>Lysine acetylation targets protein complexes and co-regulates major cellular functions.</title>
        <authorList>
            <person name="Choudhary C."/>
            <person name="Kumar C."/>
            <person name="Gnad F."/>
            <person name="Nielsen M.L."/>
            <person name="Rehman M."/>
            <person name="Walther T.C."/>
            <person name="Olsen J.V."/>
            <person name="Mann M."/>
        </authorList>
    </citation>
    <scope>ACETYLATION [LARGE SCALE ANALYSIS] AT LYS-959</scope>
    <scope>IDENTIFICATION BY MASS SPECTROMETRY [LARGE SCALE ANALYSIS]</scope>
</reference>
<reference key="29">
    <citation type="journal article" date="2010" name="J. Virol.">
        <title>Physical interaction between the herpes simplex virus type 1 exonuclease, UL12, and the DNA double-strand break-sensing MRN complex.</title>
        <authorList>
            <person name="Balasubramanian N."/>
            <person name="Bai P."/>
            <person name="Buchek G."/>
            <person name="Korza G."/>
            <person name="Weller S.K."/>
        </authorList>
    </citation>
    <scope>INTERACTION WITH HERPES SIMPLEX VIRUS 1 UL12</scope>
</reference>
<reference key="30">
    <citation type="journal article" date="2010" name="Sci. Signal.">
        <title>Quantitative phosphoproteomics reveals widespread full phosphorylation site occupancy during mitosis.</title>
        <authorList>
            <person name="Olsen J.V."/>
            <person name="Vermeulen M."/>
            <person name="Santamaria A."/>
            <person name="Kumar C."/>
            <person name="Miller M.L."/>
            <person name="Jensen L.J."/>
            <person name="Gnad F."/>
            <person name="Cox J."/>
            <person name="Jensen T.S."/>
            <person name="Nigg E.A."/>
            <person name="Brunak S."/>
            <person name="Mann M."/>
        </authorList>
    </citation>
    <scope>PHOSPHORYLATION [LARGE SCALE ANALYSIS] AT SER-635 AND THR-690</scope>
    <scope>IDENTIFICATION BY MASS SPECTROMETRY [LARGE SCALE ANALYSIS]</scope>
    <source>
        <tissue>Cervix carcinoma</tissue>
    </source>
</reference>
<reference key="31">
    <citation type="journal article" date="2011" name="BMC Syst. Biol.">
        <title>Initial characterization of the human central proteome.</title>
        <authorList>
            <person name="Burkard T.R."/>
            <person name="Planyavsky M."/>
            <person name="Kaupe I."/>
            <person name="Breitwieser F.P."/>
            <person name="Buerckstuemmer T."/>
            <person name="Bennett K.L."/>
            <person name="Superti-Furga G."/>
            <person name="Colinge J."/>
        </authorList>
    </citation>
    <scope>IDENTIFICATION BY MASS SPECTROMETRY [LARGE SCALE ANALYSIS]</scope>
</reference>
<reference key="32">
    <citation type="journal article" date="2011" name="J. Biol. Chem.">
        <title>ATM protein-dependent phosphorylation of Rad50 protein regulates DNA repair and cell cycle control.</title>
        <authorList>
            <person name="Gatei M."/>
            <person name="Jakob B."/>
            <person name="Chen P."/>
            <person name="Kijas A.W."/>
            <person name="Becherel O.J."/>
            <person name="Gueven N."/>
            <person name="Birrell G."/>
            <person name="Lee J.H."/>
            <person name="Paull T.T."/>
            <person name="Lerenthal Y."/>
            <person name="Fazry S."/>
            <person name="Taucher-Scholz G."/>
            <person name="Kalb R."/>
            <person name="Schindler D."/>
            <person name="Waltes R."/>
            <person name="Doerk T."/>
            <person name="Lavin M.F."/>
        </authorList>
    </citation>
    <scope>FUNCTION</scope>
    <scope>SUBCELLULAR LOCATION</scope>
    <scope>PHOSPHORYLATION AT SER-635</scope>
    <scope>MUTAGENESIS OF SER-635</scope>
</reference>
<reference key="33">
    <citation type="journal article" date="2013" name="J. Proteome Res.">
        <title>Toward a comprehensive characterization of a human cancer cell phosphoproteome.</title>
        <authorList>
            <person name="Zhou H."/>
            <person name="Di Palma S."/>
            <person name="Preisinger C."/>
            <person name="Peng M."/>
            <person name="Polat A.N."/>
            <person name="Heck A.J."/>
            <person name="Mohammed S."/>
        </authorList>
    </citation>
    <scope>PHOSPHORYLATION [LARGE SCALE ANALYSIS] AT SER-635 AND THR-690</scope>
    <scope>IDENTIFICATION BY MASS SPECTROMETRY [LARGE SCALE ANALYSIS]</scope>
    <source>
        <tissue>Cervix carcinoma</tissue>
        <tissue>Erythroleukemia</tissue>
    </source>
</reference>
<reference key="34">
    <citation type="journal article" date="2014" name="J. Proteomics">
        <title>An enzyme assisted RP-RPLC approach for in-depth analysis of human liver phosphoproteome.</title>
        <authorList>
            <person name="Bian Y."/>
            <person name="Song C."/>
            <person name="Cheng K."/>
            <person name="Dong M."/>
            <person name="Wang F."/>
            <person name="Huang J."/>
            <person name="Sun D."/>
            <person name="Wang L."/>
            <person name="Ye M."/>
            <person name="Zou H."/>
        </authorList>
    </citation>
    <scope>IDENTIFICATION BY MASS SPECTROMETRY [LARGE SCALE ANALYSIS]</scope>
    <source>
        <tissue>Liver</tissue>
    </source>
</reference>
<reference key="35">
    <citation type="journal article" date="2015" name="Nat. Commun.">
        <title>MCM8-9 complex promotes resection of double-strand break ends by MRE11-RAD50-NBS1 complex.</title>
        <authorList>
            <person name="Lee K.Y."/>
            <person name="Im J.S."/>
            <person name="Shibata E."/>
            <person name="Park J."/>
            <person name="Handa N."/>
            <person name="Kowalczykowski S.C."/>
            <person name="Dutta A."/>
        </authorList>
    </citation>
    <scope>IDENTIFICATION IN THE MRN COMPLEX</scope>
    <scope>INTERACTION WITH MCM8 AND MCM9</scope>
    <scope>SUBCELLULAR LOCATION</scope>
</reference>
<reference key="36">
    <citation type="journal article" date="2016" name="Cell Rep.">
        <title>MRNIP/C5orf45 interacts with the MRN complex and contributes to the DNA damage response.</title>
        <authorList>
            <person name="Staples C.J."/>
            <person name="Barone G."/>
            <person name="Myers K.N."/>
            <person name="Ganesh A."/>
            <person name="Gibbs-Seymour I."/>
            <person name="Patil A.A."/>
            <person name="Beveridge R.D."/>
            <person name="Daye C."/>
            <person name="Beniston R."/>
            <person name="Maslen S."/>
            <person name="Ahel I."/>
            <person name="Skehel J.M."/>
            <person name="Collis S.J."/>
        </authorList>
    </citation>
    <scope>INTERACTION WITH MRNIP</scope>
</reference>
<reference key="37">
    <citation type="journal article" date="2016" name="Mol. Cell">
        <title>Phosphorylated CtIP functions as a co-factor of the MRE11-RAD50-NBS1 endonuclease in DNA end resection.</title>
        <authorList>
            <person name="Anand R."/>
            <person name="Ranjha L."/>
            <person name="Cannavo E."/>
            <person name="Cejka P."/>
        </authorList>
    </citation>
    <scope>FUNCTION</scope>
    <scope>CATALYTIC ACTIVITY</scope>
</reference>
<reference key="38">
    <citation type="journal article" date="2017" name="Mol. Cell">
        <title>Single-molecule imaging reveals how Mre11-Rad50-Nbs1 initiates DNA break repair.</title>
        <authorList>
            <person name="Myler L.R."/>
            <person name="Gallardo I.F."/>
            <person name="Soniat M.M."/>
            <person name="Deshpande R.A."/>
            <person name="Gonzalez X.B."/>
            <person name="Kim Y."/>
            <person name="Paull T.T."/>
            <person name="Finkelstein I.J."/>
        </authorList>
    </citation>
    <scope>FUNCTION</scope>
    <scope>IDENTIFICATION IN THE MRN COMPLEX</scope>
</reference>
<reference key="39">
    <citation type="journal article" date="2019" name="Mol. Cell">
        <title>C1QBP promotes homologous recombination by stabilizing MRE11 and controlling the assembly and activation of MRE11/RAD50/NBS1 complex.</title>
        <authorList>
            <person name="Bai Y."/>
            <person name="Wang W."/>
            <person name="Li S."/>
            <person name="Zhan J."/>
            <person name="Li H."/>
            <person name="Zhao M."/>
            <person name="Zhou X.A."/>
            <person name="Li S."/>
            <person name="Li X."/>
            <person name="Huo Y."/>
            <person name="Shen Q."/>
            <person name="Zhou M."/>
            <person name="Zhang H."/>
            <person name="Luo J."/>
            <person name="Sung P."/>
            <person name="Zhu W.G."/>
            <person name="Xu X."/>
            <person name="Wang J."/>
        </authorList>
    </citation>
    <scope>INTERACTION WITH C1QBP AND MRE11</scope>
</reference>
<reference key="40">
    <citation type="journal article" date="2019" name="Nat. Commun.">
        <title>MRE11-RAD50-NBS1 promotes Fanconi Anemia R-loop suppression at transcription-replication conflicts.</title>
        <authorList>
            <person name="Chang E.Y."/>
            <person name="Tsai S."/>
            <person name="Aristizabal M.J."/>
            <person name="Wells J.P."/>
            <person name="Coulombe Y."/>
            <person name="Busatto F.F."/>
            <person name="Chan Y.A."/>
            <person name="Kumar A."/>
            <person name="Dan Zhu Y."/>
            <person name="Wang A.Y."/>
            <person name="Fournier L.A."/>
            <person name="Hieter P."/>
            <person name="Kobor M.S."/>
            <person name="Masson J.Y."/>
            <person name="Stirling P.C."/>
        </authorList>
    </citation>
    <scope>FUNCTION</scope>
</reference>
<reference key="41">
    <citation type="journal article" date="2020" name="Am. J. Med. Genet. A">
        <title>Human RAD50 deficiency: Confirmation of a distinctive phenotype.</title>
        <authorList>
            <person name="Ragamin A."/>
            <person name="Yigit G."/>
            <person name="Bousset K."/>
            <person name="Beleggia F."/>
            <person name="Verheijen F.W."/>
            <person name="de Wit M.Y."/>
            <person name="Strom T.M."/>
            <person name="Doerk T."/>
            <person name="Wollnik B."/>
            <person name="Mancini G.M.S."/>
        </authorList>
    </citation>
    <scope>INVOLVEMENT IN NBSLD</scope>
</reference>
<reference key="42">
    <citation type="journal article" date="2023" name="Mol. Cell">
        <title>Cryo-EM structure of the Mre11-Rad50-Nbs1 complex reveals the molecular mechanism of scaffolding functions.</title>
        <authorList>
            <person name="Rotheneder M."/>
            <person name="Stakyte K."/>
            <person name="van de Logt E."/>
            <person name="Bartho J.D."/>
            <person name="Lammens K."/>
            <person name="Fan Y."/>
            <person name="Alt A."/>
            <person name="Kessler B."/>
            <person name="Jung C."/>
            <person name="Roos W.P."/>
            <person name="Steigenberger B."/>
            <person name="Hopfner K.P."/>
        </authorList>
    </citation>
    <scope>IDENTIFICATION IN THE MRE11 COMPLEX</scope>
    <scope>SUBUNIT</scope>
    <scope>MUTAGENESIS OF 675-ASP--SER-679</scope>
</reference>
<reference evidence="45" key="43">
    <citation type="journal article" date="2017" name="Nat. Struct. Mol. Biol.">
        <title>Eukaryotic Rad50 functions as a rod-shaped dimer.</title>
        <authorList>
            <person name="Park Y.B."/>
            <person name="Hohl M."/>
            <person name="Padjasek M."/>
            <person name="Jeong E."/>
            <person name="Jin K.S."/>
            <person name="Krezel A."/>
            <person name="Petrini J.H."/>
            <person name="Cho Y."/>
        </authorList>
    </citation>
    <scope>X-RAY CRYSTALLOGRAPHY (2.40 ANGSTROMS) OF 585-766 IN COMPLEX WITH ZN(2+)</scope>
    <scope>FUNCTION</scope>
    <scope>COFACTOR</scope>
</reference>
<reference key="44">
    <citation type="journal article" date="2003" name="J. Med. Genet.">
        <title>Mutation screening of Mre11 complex genes: indication of RAD50 involvement in breast and ovarian cancer susceptibility.</title>
        <authorList>
            <person name="Heikkinen K."/>
            <person name="Karppinen S.-M."/>
            <person name="Soini Y."/>
            <person name="Maekinen M."/>
            <person name="Winqvist R."/>
        </authorList>
    </citation>
    <scope>VARIANTS LEU-94 AND HIS-224</scope>
</reference>
<feature type="chain" id="PRO_0000138641" description="DNA repair protein RAD50">
    <location>
        <begin position="1"/>
        <end position="1312"/>
    </location>
</feature>
<feature type="domain" description="Zinc-hook" evidence="6">
    <location>
        <begin position="635"/>
        <end position="734"/>
    </location>
</feature>
<feature type="coiled-coil region" evidence="5">
    <location>
        <begin position="228"/>
        <end position="359"/>
    </location>
</feature>
<feature type="coiled-coil region" evidence="5">
    <location>
        <begin position="401"/>
        <end position="598"/>
    </location>
</feature>
<feature type="coiled-coil region" evidence="5">
    <location>
        <begin position="635"/>
        <end position="673"/>
    </location>
</feature>
<feature type="coiled-coil region" evidence="5">
    <location>
        <begin position="706"/>
        <end position="734"/>
    </location>
</feature>
<feature type="coiled-coil region" evidence="5">
    <location>
        <begin position="789"/>
        <end position="1079"/>
    </location>
</feature>
<feature type="binding site" evidence="1">
    <location>
        <position position="13"/>
    </location>
    <ligand>
        <name>ATP</name>
        <dbReference type="ChEBI" id="CHEBI:30616"/>
    </ligand>
</feature>
<feature type="binding site" evidence="1">
    <location>
        <position position="38"/>
    </location>
    <ligand>
        <name>ATP</name>
        <dbReference type="ChEBI" id="CHEBI:30616"/>
    </ligand>
</feature>
<feature type="binding site" evidence="1">
    <location>
        <position position="39"/>
    </location>
    <ligand>
        <name>ATP</name>
        <dbReference type="ChEBI" id="CHEBI:30616"/>
    </ligand>
</feature>
<feature type="binding site" evidence="1">
    <location>
        <position position="41"/>
    </location>
    <ligand>
        <name>ATP</name>
        <dbReference type="ChEBI" id="CHEBI:30616"/>
    </ligand>
</feature>
<feature type="binding site" evidence="1">
    <location>
        <position position="42"/>
    </location>
    <ligand>
        <name>ATP</name>
        <dbReference type="ChEBI" id="CHEBI:30616"/>
    </ligand>
</feature>
<feature type="binding site" evidence="1">
    <location>
        <position position="43"/>
    </location>
    <ligand>
        <name>ATP</name>
        <dbReference type="ChEBI" id="CHEBI:30616"/>
    </ligand>
</feature>
<feature type="binding site" evidence="1">
    <location>
        <position position="43"/>
    </location>
    <ligand>
        <name>Mg(2+)</name>
        <dbReference type="ChEBI" id="CHEBI:18420"/>
    </ligand>
</feature>
<feature type="binding site" evidence="1">
    <location>
        <position position="44"/>
    </location>
    <ligand>
        <name>ATP</name>
        <dbReference type="ChEBI" id="CHEBI:30616"/>
    </ligand>
</feature>
<feature type="binding site" evidence="1">
    <location>
        <position position="67"/>
    </location>
    <ligand>
        <name>ATP</name>
        <dbReference type="ChEBI" id="CHEBI:30616"/>
    </ligand>
</feature>
<feature type="binding site" evidence="1">
    <location>
        <position position="69"/>
    </location>
    <ligand>
        <name>ATP</name>
        <dbReference type="ChEBI" id="CHEBI:30616"/>
    </ligand>
</feature>
<feature type="binding site" evidence="1">
    <location>
        <position position="159"/>
    </location>
    <ligand>
        <name>ATP</name>
        <dbReference type="ChEBI" id="CHEBI:30616"/>
    </ligand>
</feature>
<feature type="binding site" evidence="1">
    <location>
        <position position="159"/>
    </location>
    <ligand>
        <name>Mg(2+)</name>
        <dbReference type="ChEBI" id="CHEBI:18420"/>
    </ligand>
</feature>
<feature type="binding site" evidence="6 27 45">
    <location>
        <position position="681"/>
    </location>
    <ligand>
        <name>Zn(2+)</name>
        <dbReference type="ChEBI" id="CHEBI:29105"/>
    </ligand>
</feature>
<feature type="binding site" evidence="6 45">
    <location>
        <position position="684"/>
    </location>
    <ligand>
        <name>Zn(2+)</name>
        <dbReference type="ChEBI" id="CHEBI:29105"/>
    </ligand>
</feature>
<feature type="modified residue" description="Phosphoserine; by ATM" evidence="23 46 47 50 51">
    <location>
        <position position="635"/>
    </location>
</feature>
<feature type="modified residue" description="Phosphothreonine" evidence="47 49 50 51">
    <location>
        <position position="690"/>
    </location>
</feature>
<feature type="modified residue" description="N6-acetyllysine" evidence="48">
    <location>
        <position position="959"/>
    </location>
</feature>
<feature type="splice variant" id="VSP_012590" description="In isoform 3." evidence="38">
    <location>
        <begin position="1"/>
        <end position="139"/>
    </location>
</feature>
<feature type="splice variant" id="VSP_012591" description="In isoform 2." evidence="41">
    <original>MSRIE</original>
    <variation>MLIFSVRDMFA</variation>
    <location>
        <begin position="1"/>
        <end position="5"/>
    </location>
</feature>
<feature type="sequence variant" id="VAR_025526" description="In dbSNP:rs28903085." evidence="14">
    <original>I</original>
    <variation>L</variation>
    <location>
        <position position="94"/>
    </location>
</feature>
<feature type="sequence variant" id="VAR_029168" description="In dbSNP:rs28903086.">
    <original>V</original>
    <variation>I</variation>
    <location>
        <position position="127"/>
    </location>
</feature>
<feature type="sequence variant" id="VAR_022085" description="In dbSNP:rs2230017.">
    <original>T</original>
    <variation>I</variation>
    <location>
        <position position="191"/>
    </location>
</feature>
<feature type="sequence variant" id="VAR_029169" description="In dbSNP:rs28903087.">
    <original>R</original>
    <variation>W</variation>
    <location>
        <position position="193"/>
    </location>
</feature>
<feature type="sequence variant" id="VAR_025527" description="In dbSNP:rs28903088." evidence="14">
    <original>R</original>
    <variation>H</variation>
    <location>
        <position position="224"/>
    </location>
</feature>
<feature type="sequence variant" id="VAR_034436" description="In dbSNP:rs28903090.">
    <original>V</original>
    <variation>L</variation>
    <location>
        <position position="315"/>
    </location>
</feature>
<feature type="sequence variant" id="VAR_061779" description="In dbSNP:rs55653181.">
    <original>G</original>
    <variation>A</variation>
    <location>
        <position position="469"/>
    </location>
</feature>
<feature type="sequence variant" id="VAR_020958" description="In dbSNP:rs1047380." evidence="37">
    <original>K</original>
    <variation>E</variation>
    <location>
        <position position="616"/>
    </location>
</feature>
<feature type="sequence variant" id="VAR_020959" description="In dbSNP:rs1047382." evidence="37">
    <original>V</original>
    <variation>A</variation>
    <location>
        <position position="697"/>
    </location>
</feature>
<feature type="sequence variant" id="VAR_029170" description="In dbSNP:rs28903093.">
    <original>V</original>
    <variation>A</variation>
    <location>
        <position position="842"/>
    </location>
</feature>
<feature type="sequence variant" id="VAR_020960" description="In dbSNP:rs1047386." evidence="37">
    <original>Y</original>
    <variation>H</variation>
    <location>
        <position position="964"/>
    </location>
</feature>
<feature type="sequence variant" id="VAR_020961" description="In dbSNP:rs1129482." evidence="37">
    <original>K</original>
    <variation>M</variation>
    <location>
        <position position="973"/>
    </location>
</feature>
<feature type="sequence variant" id="VAR_020962" description="In dbSNP:rs1047387.">
    <original>R</original>
    <variation>G</variation>
    <location>
        <position position="1038"/>
    </location>
</feature>
<feature type="sequence variant" id="VAR_089008" description="In NBSLD." evidence="21">
    <location>
        <begin position="1093"/>
        <end position="1312"/>
    </location>
</feature>
<feature type="mutagenesis site" description="Abolishes ability to degrade ATP." evidence="35">
    <original>K</original>
    <variation>N</variation>
    <location>
        <position position="42"/>
    </location>
</feature>
<feature type="mutagenesis site" description="Abolished phosphorylation by ATM, leading to impaired ability to mediate DNA repair." evidence="23">
    <original>S</original>
    <variation>G</variation>
    <location>
        <position position="635"/>
    </location>
</feature>
<feature type="mutagenesis site" description="Decreased ability to mediate DNA repair due to impaired MRN oligomers formation." evidence="32">
    <original>DENQS</original>
    <variation>AAAAA</variation>
    <location>
        <begin position="675"/>
        <end position="679"/>
    </location>
</feature>
<feature type="mutagenesis site" description="Abolished ATPase activity and ability and activate ATM." evidence="18 20">
    <original>S</original>
    <variation>R</variation>
    <location>
        <position position="1202"/>
    </location>
</feature>
<feature type="mutagenesis site" description="Abolishes ability to degrade ATP." evidence="35">
    <original>D</original>
    <variation>A</variation>
    <location>
        <position position="1231"/>
    </location>
</feature>
<feature type="sequence conflict" description="In Ref. 3; CAA99729." evidence="42" ref="3">
    <original>K</original>
    <variation>E</variation>
    <location>
        <position position="204"/>
    </location>
</feature>
<feature type="sequence conflict" description="In Ref. 6; AAH62603/AAH73850." evidence="42" ref="6">
    <original>E</original>
    <variation>K</variation>
    <location>
        <position position="723"/>
    </location>
</feature>
<feature type="sequence conflict" description="In Ref. 3; CAA99729." evidence="42" ref="3">
    <original>V</original>
    <variation>A</variation>
    <location>
        <position position="733"/>
    </location>
</feature>
<feature type="helix" evidence="52">
    <location>
        <begin position="586"/>
        <end position="632"/>
    </location>
</feature>
<feature type="helix" evidence="52">
    <location>
        <begin position="638"/>
        <end position="673"/>
    </location>
</feature>
<feature type="turn" evidence="52">
    <location>
        <begin position="674"/>
        <end position="676"/>
    </location>
</feature>
<feature type="strand" evidence="52">
    <location>
        <begin position="682"/>
        <end position="684"/>
    </location>
</feature>
<feature type="helix" evidence="52">
    <location>
        <begin position="691"/>
        <end position="704"/>
    </location>
</feature>
<feature type="turn" evidence="52">
    <location>
        <begin position="705"/>
        <end position="707"/>
    </location>
</feature>
<feature type="helix" evidence="52">
    <location>
        <begin position="708"/>
        <end position="731"/>
    </location>
</feature>
<feature type="helix" evidence="52">
    <location>
        <begin position="733"/>
        <end position="744"/>
    </location>
</feature>
<feature type="helix" evidence="52">
    <location>
        <begin position="746"/>
        <end position="764"/>
    </location>
</feature>
<dbReference type="EC" id="3.6.-.-" evidence="26 35 43"/>
<dbReference type="EMBL" id="U63139">
    <property type="protein sequence ID" value="AAB07119.1"/>
    <property type="molecule type" value="mRNA"/>
</dbReference>
<dbReference type="EMBL" id="AF057299">
    <property type="protein sequence ID" value="AAD50325.1"/>
    <property type="molecule type" value="mRNA"/>
</dbReference>
<dbReference type="EMBL" id="AF057300">
    <property type="protein sequence ID" value="AAD50326.1"/>
    <property type="molecule type" value="mRNA"/>
</dbReference>
<dbReference type="EMBL" id="Z75311">
    <property type="protein sequence ID" value="CAA99729.1"/>
    <property type="molecule type" value="mRNA"/>
</dbReference>
<dbReference type="EMBL" id="AC116366">
    <property type="status" value="NOT_ANNOTATED_CDS"/>
    <property type="molecule type" value="Genomic_DNA"/>
</dbReference>
<dbReference type="EMBL" id="AC004042">
    <property type="status" value="NOT_ANNOTATED_CDS"/>
    <property type="molecule type" value="Genomic_DNA"/>
</dbReference>
<dbReference type="EMBL" id="CH471062">
    <property type="protein sequence ID" value="EAW62329.1"/>
    <property type="molecule type" value="Genomic_DNA"/>
</dbReference>
<dbReference type="EMBL" id="BC062603">
    <property type="protein sequence ID" value="AAH62603.1"/>
    <property type="status" value="ALT_SEQ"/>
    <property type="molecule type" value="mRNA"/>
</dbReference>
<dbReference type="EMBL" id="BC073850">
    <property type="protein sequence ID" value="AAH73850.1"/>
    <property type="molecule type" value="mRNA"/>
</dbReference>
<dbReference type="EMBL" id="BC136436">
    <property type="protein sequence ID" value="AAI36437.1"/>
    <property type="molecule type" value="mRNA"/>
</dbReference>
<dbReference type="CCDS" id="CCDS34233.1">
    <molecule id="Q92878-1"/>
</dbReference>
<dbReference type="RefSeq" id="NP_005723.2">
    <molecule id="Q92878-1"/>
    <property type="nucleotide sequence ID" value="NM_005732.3"/>
</dbReference>
<dbReference type="PDB" id="5GOX">
    <property type="method" value="X-ray"/>
    <property type="resolution" value="2.40 A"/>
    <property type="chains" value="A/B=585-766"/>
</dbReference>
<dbReference type="PDBsum" id="5GOX"/>
<dbReference type="SMR" id="Q92878"/>
<dbReference type="BioGRID" id="115417">
    <property type="interactions" value="394"/>
</dbReference>
<dbReference type="ComplexPortal" id="CPX-4442">
    <property type="entry name" value="MRN double-strand break repair complex"/>
</dbReference>
<dbReference type="CORUM" id="Q92878"/>
<dbReference type="DIP" id="DIP-33606N"/>
<dbReference type="FunCoup" id="Q92878">
    <property type="interactions" value="3264"/>
</dbReference>
<dbReference type="IntAct" id="Q92878">
    <property type="interactions" value="153"/>
</dbReference>
<dbReference type="MINT" id="Q92878"/>
<dbReference type="STRING" id="9606.ENSP00000368100"/>
<dbReference type="GlyCosmos" id="Q92878">
    <property type="glycosylation" value="1 site, 1 glycan"/>
</dbReference>
<dbReference type="GlyGen" id="Q92878">
    <property type="glycosylation" value="5 sites, 1 O-linked glycan (5 sites)"/>
</dbReference>
<dbReference type="iPTMnet" id="Q92878"/>
<dbReference type="PhosphoSitePlus" id="Q92878"/>
<dbReference type="SwissPalm" id="Q92878"/>
<dbReference type="BioMuta" id="RAD50"/>
<dbReference type="DMDM" id="60392986"/>
<dbReference type="CPTAC" id="CPTAC-3286"/>
<dbReference type="CPTAC" id="CPTAC-5927"/>
<dbReference type="CPTAC" id="CPTAC-954"/>
<dbReference type="jPOST" id="Q92878"/>
<dbReference type="MassIVE" id="Q92878"/>
<dbReference type="PaxDb" id="9606-ENSP00000368100"/>
<dbReference type="PeptideAtlas" id="Q92878"/>
<dbReference type="ProteomicsDB" id="75562">
    <molecule id="Q92878-1"/>
</dbReference>
<dbReference type="ProteomicsDB" id="75563">
    <molecule id="Q92878-2"/>
</dbReference>
<dbReference type="ProteomicsDB" id="75564">
    <molecule id="Q92878-3"/>
</dbReference>
<dbReference type="Pumba" id="Q92878"/>
<dbReference type="Antibodypedia" id="14460">
    <property type="antibodies" value="473 antibodies from 38 providers"/>
</dbReference>
<dbReference type="CPTC" id="Q92878">
    <property type="antibodies" value="2 antibodies"/>
</dbReference>
<dbReference type="DNASU" id="10111"/>
<dbReference type="Ensembl" id="ENST00000378823.8">
    <molecule id="Q92878-1"/>
    <property type="protein sequence ID" value="ENSP00000368100.4"/>
    <property type="gene ID" value="ENSG00000113522.14"/>
</dbReference>
<dbReference type="GeneID" id="10111"/>
<dbReference type="KEGG" id="hsa:10111"/>
<dbReference type="MANE-Select" id="ENST00000378823.8">
    <property type="protein sequence ID" value="ENSP00000368100.4"/>
    <property type="RefSeq nucleotide sequence ID" value="NM_005732.4"/>
    <property type="RefSeq protein sequence ID" value="NP_005723.2"/>
</dbReference>
<dbReference type="UCSC" id="uc003kxi.4">
    <molecule id="Q92878-1"/>
    <property type="organism name" value="human"/>
</dbReference>
<dbReference type="AGR" id="HGNC:9816"/>
<dbReference type="CTD" id="10111"/>
<dbReference type="DisGeNET" id="10111"/>
<dbReference type="GeneCards" id="RAD50"/>
<dbReference type="HGNC" id="HGNC:9816">
    <property type="gene designation" value="RAD50"/>
</dbReference>
<dbReference type="HPA" id="ENSG00000113522">
    <property type="expression patterns" value="Low tissue specificity"/>
</dbReference>
<dbReference type="MalaCards" id="RAD50"/>
<dbReference type="MIM" id="604040">
    <property type="type" value="gene"/>
</dbReference>
<dbReference type="MIM" id="613078">
    <property type="type" value="phenotype"/>
</dbReference>
<dbReference type="neXtProt" id="NX_Q92878"/>
<dbReference type="OpenTargets" id="ENSG00000113522"/>
<dbReference type="Orphanet" id="145">
    <property type="disease" value="Hereditary breast and/or ovarian cancer syndrome"/>
</dbReference>
<dbReference type="Orphanet" id="240760">
    <property type="disease" value="Nijmegen breakage syndrome-like disorder"/>
</dbReference>
<dbReference type="PharmGKB" id="PA34175"/>
<dbReference type="VEuPathDB" id="HostDB:ENSG00000113522"/>
<dbReference type="eggNOG" id="KOG0962">
    <property type="taxonomic scope" value="Eukaryota"/>
</dbReference>
<dbReference type="GeneTree" id="ENSGT00390000018781"/>
<dbReference type="HOGENOM" id="CLU_006184_0_0_1"/>
<dbReference type="InParanoid" id="Q92878"/>
<dbReference type="OMA" id="FSDYYYR"/>
<dbReference type="OrthoDB" id="18797at2759"/>
<dbReference type="PAN-GO" id="Q92878">
    <property type="GO annotations" value="11 GO annotations based on evolutionary models"/>
</dbReference>
<dbReference type="PhylomeDB" id="Q92878"/>
<dbReference type="TreeFam" id="TF101217"/>
<dbReference type="PathwayCommons" id="Q92878"/>
<dbReference type="Reactome" id="R-HSA-2559586">
    <property type="pathway name" value="DNA Damage/Telomere Stress Induced Senescence"/>
</dbReference>
<dbReference type="Reactome" id="R-HSA-5685938">
    <property type="pathway name" value="HDR through Single Strand Annealing (SSA)"/>
</dbReference>
<dbReference type="Reactome" id="R-HSA-5685939">
    <property type="pathway name" value="HDR through MMEJ (alt-NHEJ)"/>
</dbReference>
<dbReference type="Reactome" id="R-HSA-5685942">
    <property type="pathway name" value="HDR through Homologous Recombination (HRR)"/>
</dbReference>
<dbReference type="Reactome" id="R-HSA-5693548">
    <property type="pathway name" value="Sensing of DNA Double Strand Breaks"/>
</dbReference>
<dbReference type="Reactome" id="R-HSA-5693554">
    <property type="pathway name" value="Resolution of D-loop Structures through Synthesis-Dependent Strand Annealing (SDSA)"/>
</dbReference>
<dbReference type="Reactome" id="R-HSA-5693565">
    <property type="pathway name" value="Recruitment and ATM-mediated phosphorylation of repair and signaling proteins at DNA double strand breaks"/>
</dbReference>
<dbReference type="Reactome" id="R-HSA-5693568">
    <property type="pathway name" value="Resolution of D-loop Structures through Holliday Junction Intermediates"/>
</dbReference>
<dbReference type="Reactome" id="R-HSA-5693571">
    <property type="pathway name" value="Nonhomologous End-Joining (NHEJ)"/>
</dbReference>
<dbReference type="Reactome" id="R-HSA-5693579">
    <property type="pathway name" value="Homologous DNA Pairing and Strand Exchange"/>
</dbReference>
<dbReference type="Reactome" id="R-HSA-5693607">
    <property type="pathway name" value="Processing of DNA double-strand break ends"/>
</dbReference>
<dbReference type="Reactome" id="R-HSA-5693616">
    <property type="pathway name" value="Presynaptic phase of homologous DNA pairing and strand exchange"/>
</dbReference>
<dbReference type="Reactome" id="R-HSA-6804756">
    <property type="pathway name" value="Regulation of TP53 Activity through Phosphorylation"/>
</dbReference>
<dbReference type="Reactome" id="R-HSA-69473">
    <property type="pathway name" value="G2/M DNA damage checkpoint"/>
</dbReference>
<dbReference type="Reactome" id="R-HSA-912446">
    <property type="pathway name" value="Meiotic recombination"/>
</dbReference>
<dbReference type="Reactome" id="R-HSA-9701192">
    <property type="pathway name" value="Defective homologous recombination repair (HRR) due to BRCA1 loss of function"/>
</dbReference>
<dbReference type="Reactome" id="R-HSA-9704331">
    <property type="pathway name" value="Defective HDR through Homologous Recombination Repair (HRR) due to PALB2 loss of BRCA1 binding function"/>
</dbReference>
<dbReference type="Reactome" id="R-HSA-9704646">
    <property type="pathway name" value="Defective HDR through Homologous Recombination Repair (HRR) due to PALB2 loss of BRCA2/RAD51/RAD51C binding function"/>
</dbReference>
<dbReference type="Reactome" id="R-HSA-9709570">
    <property type="pathway name" value="Impaired BRCA2 binding to RAD51"/>
</dbReference>
<dbReference type="Reactome" id="R-HSA-9709603">
    <property type="pathway name" value="Impaired BRCA2 binding to PALB2"/>
</dbReference>
<dbReference type="SignaLink" id="Q92878"/>
<dbReference type="SIGNOR" id="Q92878"/>
<dbReference type="BioGRID-ORCS" id="10111">
    <property type="hits" value="81 hits in 1170 CRISPR screens"/>
</dbReference>
<dbReference type="CD-CODE" id="91857CE7">
    <property type="entry name" value="Nucleolus"/>
</dbReference>
<dbReference type="CD-CODE" id="A0DCDA94">
    <property type="entry name" value="DNA damage foci"/>
</dbReference>
<dbReference type="ChiTaRS" id="RAD50">
    <property type="organism name" value="human"/>
</dbReference>
<dbReference type="GeneWiki" id="Rad50"/>
<dbReference type="GenomeRNAi" id="10111"/>
<dbReference type="Pharos" id="Q92878">
    <property type="development level" value="Tbio"/>
</dbReference>
<dbReference type="PRO" id="PR:Q92878"/>
<dbReference type="Proteomes" id="UP000005640">
    <property type="component" value="Chromosome 5"/>
</dbReference>
<dbReference type="RNAct" id="Q92878">
    <property type="molecule type" value="protein"/>
</dbReference>
<dbReference type="Bgee" id="ENSG00000113522">
    <property type="expression patterns" value="Expressed in corpus callosum and 113 other cell types or tissues"/>
</dbReference>
<dbReference type="ExpressionAtlas" id="Q92878">
    <property type="expression patterns" value="baseline and differential"/>
</dbReference>
<dbReference type="GO" id="GO:0070533">
    <property type="term" value="C:BRCA1-C complex"/>
    <property type="evidence" value="ECO:0000353"/>
    <property type="project" value="ComplexPortal"/>
</dbReference>
<dbReference type="GO" id="GO:0098687">
    <property type="term" value="C:chromosomal region"/>
    <property type="evidence" value="ECO:0000303"/>
    <property type="project" value="ComplexPortal"/>
</dbReference>
<dbReference type="GO" id="GO:0000781">
    <property type="term" value="C:chromosome, telomeric region"/>
    <property type="evidence" value="ECO:0000314"/>
    <property type="project" value="BHF-UCL"/>
</dbReference>
<dbReference type="GO" id="GO:0000794">
    <property type="term" value="C:condensed nuclear chromosome"/>
    <property type="evidence" value="ECO:0000318"/>
    <property type="project" value="GO_Central"/>
</dbReference>
<dbReference type="GO" id="GO:0016020">
    <property type="term" value="C:membrane"/>
    <property type="evidence" value="ECO:0007005"/>
    <property type="project" value="UniProtKB"/>
</dbReference>
<dbReference type="GO" id="GO:0030870">
    <property type="term" value="C:Mre11 complex"/>
    <property type="evidence" value="ECO:0000314"/>
    <property type="project" value="UniProtKB"/>
</dbReference>
<dbReference type="GO" id="GO:0005654">
    <property type="term" value="C:nucleoplasm"/>
    <property type="evidence" value="ECO:0000304"/>
    <property type="project" value="Reactome"/>
</dbReference>
<dbReference type="GO" id="GO:0005634">
    <property type="term" value="C:nucleus"/>
    <property type="evidence" value="ECO:0000303"/>
    <property type="project" value="ComplexPortal"/>
</dbReference>
<dbReference type="GO" id="GO:0035861">
    <property type="term" value="C:site of double-strand break"/>
    <property type="evidence" value="ECO:0000314"/>
    <property type="project" value="UniProtKB"/>
</dbReference>
<dbReference type="GO" id="GO:0005524">
    <property type="term" value="F:ATP binding"/>
    <property type="evidence" value="ECO:0007669"/>
    <property type="project" value="UniProtKB-KW"/>
</dbReference>
<dbReference type="GO" id="GO:0016887">
    <property type="term" value="F:ATP hydrolysis activity"/>
    <property type="evidence" value="ECO:0000314"/>
    <property type="project" value="UniProtKB"/>
</dbReference>
<dbReference type="GO" id="GO:0003677">
    <property type="term" value="F:DNA binding"/>
    <property type="evidence" value="ECO:0000314"/>
    <property type="project" value="BHF-UCL"/>
</dbReference>
<dbReference type="GO" id="GO:0003691">
    <property type="term" value="F:double-stranded telomeric DNA binding"/>
    <property type="evidence" value="ECO:0000318"/>
    <property type="project" value="GO_Central"/>
</dbReference>
<dbReference type="GO" id="GO:0051880">
    <property type="term" value="F:G-quadruplex DNA binding"/>
    <property type="evidence" value="ECO:0000318"/>
    <property type="project" value="GO_Central"/>
</dbReference>
<dbReference type="GO" id="GO:0042802">
    <property type="term" value="F:identical protein binding"/>
    <property type="evidence" value="ECO:0000353"/>
    <property type="project" value="IntAct"/>
</dbReference>
<dbReference type="GO" id="GO:0046872">
    <property type="term" value="F:metal ion binding"/>
    <property type="evidence" value="ECO:0007669"/>
    <property type="project" value="UniProtKB-KW"/>
</dbReference>
<dbReference type="GO" id="GO:0043539">
    <property type="term" value="F:protein serine/threonine kinase activator activity"/>
    <property type="evidence" value="ECO:0000314"/>
    <property type="project" value="UniProtKB"/>
</dbReference>
<dbReference type="GO" id="GO:0030674">
    <property type="term" value="F:protein-macromolecule adaptor activity"/>
    <property type="evidence" value="ECO:0000314"/>
    <property type="project" value="UniProtKB"/>
</dbReference>
<dbReference type="GO" id="GO:0043047">
    <property type="term" value="F:single-stranded telomeric DNA binding"/>
    <property type="evidence" value="ECO:0000318"/>
    <property type="project" value="GO_Central"/>
</dbReference>
<dbReference type="GO" id="GO:0070192">
    <property type="term" value="P:chromosome organization involved in meiotic cell cycle"/>
    <property type="evidence" value="ECO:0000318"/>
    <property type="project" value="GO_Central"/>
</dbReference>
<dbReference type="GO" id="GO:0006974">
    <property type="term" value="P:DNA damage response"/>
    <property type="evidence" value="ECO:0000314"/>
    <property type="project" value="MGI"/>
</dbReference>
<dbReference type="GO" id="GO:0000729">
    <property type="term" value="P:DNA double-strand break processing"/>
    <property type="evidence" value="ECO:0000314"/>
    <property type="project" value="UniProtKB"/>
</dbReference>
<dbReference type="GO" id="GO:0006310">
    <property type="term" value="P:DNA recombination"/>
    <property type="evidence" value="ECO:0000314"/>
    <property type="project" value="UniProtKB"/>
</dbReference>
<dbReference type="GO" id="GO:0006281">
    <property type="term" value="P:DNA repair"/>
    <property type="evidence" value="ECO:0000314"/>
    <property type="project" value="UniProtKB"/>
</dbReference>
<dbReference type="GO" id="GO:0110025">
    <property type="term" value="P:DNA strand resection involved in replication fork processing"/>
    <property type="evidence" value="ECO:0000314"/>
    <property type="project" value="UniProtKB"/>
</dbReference>
<dbReference type="GO" id="GO:0006302">
    <property type="term" value="P:double-strand break repair"/>
    <property type="evidence" value="ECO:0000315"/>
    <property type="project" value="UniProtKB"/>
</dbReference>
<dbReference type="GO" id="GO:0000724">
    <property type="term" value="P:double-strand break repair via homologous recombination"/>
    <property type="evidence" value="ECO:0000314"/>
    <property type="project" value="UniProtKB"/>
</dbReference>
<dbReference type="GO" id="GO:0035825">
    <property type="term" value="P:homologous recombination"/>
    <property type="evidence" value="ECO:0000303"/>
    <property type="project" value="ComplexPortal"/>
</dbReference>
<dbReference type="GO" id="GO:0044818">
    <property type="term" value="P:mitotic G2/M transition checkpoint"/>
    <property type="evidence" value="ECO:0000303"/>
    <property type="project" value="ComplexPortal"/>
</dbReference>
<dbReference type="GO" id="GO:1904354">
    <property type="term" value="P:negative regulation of telomere capping"/>
    <property type="evidence" value="ECO:0000314"/>
    <property type="project" value="BHF-UCL"/>
</dbReference>
<dbReference type="GO" id="GO:2000781">
    <property type="term" value="P:positive regulation of double-strand break repair"/>
    <property type="evidence" value="ECO:0000315"/>
    <property type="project" value="BHF-UCL"/>
</dbReference>
<dbReference type="GO" id="GO:0032206">
    <property type="term" value="P:positive regulation of telomere maintenance"/>
    <property type="evidence" value="ECO:0000315"/>
    <property type="project" value="BHF-UCL"/>
</dbReference>
<dbReference type="GO" id="GO:0062176">
    <property type="term" value="P:R-loop processing"/>
    <property type="evidence" value="ECO:0000314"/>
    <property type="project" value="UniProtKB"/>
</dbReference>
<dbReference type="GO" id="GO:0007131">
    <property type="term" value="P:reciprocal meiotic recombination"/>
    <property type="evidence" value="ECO:0000304"/>
    <property type="project" value="ProtInc"/>
</dbReference>
<dbReference type="GO" id="GO:0000019">
    <property type="term" value="P:regulation of mitotic recombination"/>
    <property type="evidence" value="ECO:0000314"/>
    <property type="project" value="UniProtKB"/>
</dbReference>
<dbReference type="GO" id="GO:0000723">
    <property type="term" value="P:telomere maintenance"/>
    <property type="evidence" value="ECO:0000304"/>
    <property type="project" value="BHF-UCL"/>
</dbReference>
<dbReference type="GO" id="GO:0000722">
    <property type="term" value="P:telomere maintenance via recombination"/>
    <property type="evidence" value="ECO:0000318"/>
    <property type="project" value="GO_Central"/>
</dbReference>
<dbReference type="GO" id="GO:0007004">
    <property type="term" value="P:telomere maintenance via telomerase"/>
    <property type="evidence" value="ECO:0000314"/>
    <property type="project" value="UniProtKB"/>
</dbReference>
<dbReference type="GO" id="GO:0031860">
    <property type="term" value="P:telomeric 3' overhang formation"/>
    <property type="evidence" value="ECO:0000315"/>
    <property type="project" value="BHF-UCL"/>
</dbReference>
<dbReference type="FunFam" id="3.40.50.300:FF:001037">
    <property type="entry name" value="DNA repair protein RAD50"/>
    <property type="match status" value="1"/>
</dbReference>
<dbReference type="FunFam" id="3.40.50.300:FF:001065">
    <property type="entry name" value="DNA repair protein RAD50 isoform X1"/>
    <property type="match status" value="1"/>
</dbReference>
<dbReference type="Gene3D" id="3.40.50.300">
    <property type="entry name" value="P-loop containing nucleotide triphosphate hydrolases"/>
    <property type="match status" value="2"/>
</dbReference>
<dbReference type="InterPro" id="IPR027417">
    <property type="entry name" value="P-loop_NTPase"/>
</dbReference>
<dbReference type="InterPro" id="IPR038729">
    <property type="entry name" value="Rad50/SbcC_AAA"/>
</dbReference>
<dbReference type="InterPro" id="IPR004584">
    <property type="entry name" value="Rad50_eukaryotes"/>
</dbReference>
<dbReference type="InterPro" id="IPR013134">
    <property type="entry name" value="Zn_hook_RAD50"/>
</dbReference>
<dbReference type="NCBIfam" id="TIGR00606">
    <property type="entry name" value="rad50"/>
    <property type="match status" value="1"/>
</dbReference>
<dbReference type="PANTHER" id="PTHR18867:SF12">
    <property type="entry name" value="DNA REPAIR PROTEIN RAD50"/>
    <property type="match status" value="1"/>
</dbReference>
<dbReference type="PANTHER" id="PTHR18867">
    <property type="entry name" value="RAD50"/>
    <property type="match status" value="1"/>
</dbReference>
<dbReference type="Pfam" id="PF13476">
    <property type="entry name" value="AAA_23"/>
    <property type="match status" value="1"/>
</dbReference>
<dbReference type="Pfam" id="PF04423">
    <property type="entry name" value="Rad50_zn_hook"/>
    <property type="match status" value="1"/>
</dbReference>
<dbReference type="Pfam" id="PF13558">
    <property type="entry name" value="SbcC_Walker_B"/>
    <property type="match status" value="1"/>
</dbReference>
<dbReference type="SUPFAM" id="SSF52540">
    <property type="entry name" value="P-loop containing nucleoside triphosphate hydrolases"/>
    <property type="match status" value="2"/>
</dbReference>
<dbReference type="SUPFAM" id="SSF75712">
    <property type="entry name" value="Rad50 coiled-coil Zn hook"/>
    <property type="match status" value="1"/>
</dbReference>
<dbReference type="PROSITE" id="PS51131">
    <property type="entry name" value="ZN_HOOK"/>
    <property type="match status" value="1"/>
</dbReference>
<protein>
    <recommendedName>
        <fullName>DNA repair protein RAD50</fullName>
        <shortName evidence="40">hRAD50</shortName>
        <ecNumber evidence="26 35 43">3.6.-.-</ecNumber>
    </recommendedName>
</protein>
<evidence type="ECO:0000250" key="1">
    <source>
        <dbReference type="UniProtKB" id="G0SHW7"/>
    </source>
</evidence>
<evidence type="ECO:0000250" key="2">
    <source>
        <dbReference type="UniProtKB" id="P58301"/>
    </source>
</evidence>
<evidence type="ECO:0000250" key="3">
    <source>
        <dbReference type="UniProtKB" id="P70388"/>
    </source>
</evidence>
<evidence type="ECO:0000250" key="4">
    <source>
        <dbReference type="UniProtKB" id="Q9X1X1"/>
    </source>
</evidence>
<evidence type="ECO:0000255" key="5"/>
<evidence type="ECO:0000255" key="6">
    <source>
        <dbReference type="PROSITE-ProRule" id="PRU00471"/>
    </source>
</evidence>
<evidence type="ECO:0000269" key="7">
    <source>
    </source>
</evidence>
<evidence type="ECO:0000269" key="8">
    <source>
    </source>
</evidence>
<evidence type="ECO:0000269" key="9">
    <source>
    </source>
</evidence>
<evidence type="ECO:0000269" key="10">
    <source>
    </source>
</evidence>
<evidence type="ECO:0000269" key="11">
    <source>
    </source>
</evidence>
<evidence type="ECO:0000269" key="12">
    <source>
    </source>
</evidence>
<evidence type="ECO:0000269" key="13">
    <source>
    </source>
</evidence>
<evidence type="ECO:0000269" key="14">
    <source>
    </source>
</evidence>
<evidence type="ECO:0000269" key="15">
    <source>
    </source>
</evidence>
<evidence type="ECO:0000269" key="16">
    <source>
    </source>
</evidence>
<evidence type="ECO:0000269" key="17">
    <source>
    </source>
</evidence>
<evidence type="ECO:0000269" key="18">
    <source>
    </source>
</evidence>
<evidence type="ECO:0000269" key="19">
    <source>
    </source>
</evidence>
<evidence type="ECO:0000269" key="20">
    <source>
    </source>
</evidence>
<evidence type="ECO:0000269" key="21">
    <source>
    </source>
</evidence>
<evidence type="ECO:0000269" key="22">
    <source>
    </source>
</evidence>
<evidence type="ECO:0000269" key="23">
    <source>
    </source>
</evidence>
<evidence type="ECO:0000269" key="24">
    <source>
    </source>
</evidence>
<evidence type="ECO:0000269" key="25">
    <source>
    </source>
</evidence>
<evidence type="ECO:0000269" key="26">
    <source>
    </source>
</evidence>
<evidence type="ECO:0000269" key="27">
    <source>
    </source>
</evidence>
<evidence type="ECO:0000269" key="28">
    <source>
    </source>
</evidence>
<evidence type="ECO:0000269" key="29">
    <source>
    </source>
</evidence>
<evidence type="ECO:0000269" key="30">
    <source>
    </source>
</evidence>
<evidence type="ECO:0000269" key="31">
    <source>
    </source>
</evidence>
<evidence type="ECO:0000269" key="32">
    <source>
    </source>
</evidence>
<evidence type="ECO:0000269" key="33">
    <source>
    </source>
</evidence>
<evidence type="ECO:0000269" key="34">
    <source>
    </source>
</evidence>
<evidence type="ECO:0000269" key="35">
    <source>
    </source>
</evidence>
<evidence type="ECO:0000269" key="36">
    <source>
    </source>
</evidence>
<evidence type="ECO:0000269" key="37">
    <source ref="3"/>
</evidence>
<evidence type="ECO:0000303" key="38">
    <source>
    </source>
</evidence>
<evidence type="ECO:0000303" key="39">
    <source>
    </source>
</evidence>
<evidence type="ECO:0000303" key="40">
    <source>
    </source>
</evidence>
<evidence type="ECO:0000303" key="41">
    <source ref="3"/>
</evidence>
<evidence type="ECO:0000305" key="42"/>
<evidence type="ECO:0000305" key="43">
    <source>
    </source>
</evidence>
<evidence type="ECO:0000312" key="44">
    <source>
        <dbReference type="HGNC" id="HGNC:9816"/>
    </source>
</evidence>
<evidence type="ECO:0007744" key="45">
    <source>
        <dbReference type="PDB" id="5GOX"/>
    </source>
</evidence>
<evidence type="ECO:0007744" key="46">
    <source>
    </source>
</evidence>
<evidence type="ECO:0007744" key="47">
    <source>
    </source>
</evidence>
<evidence type="ECO:0007744" key="48">
    <source>
    </source>
</evidence>
<evidence type="ECO:0007744" key="49">
    <source>
    </source>
</evidence>
<evidence type="ECO:0007744" key="50">
    <source>
    </source>
</evidence>
<evidence type="ECO:0007744" key="51">
    <source>
    </source>
</evidence>
<evidence type="ECO:0007829" key="52">
    <source>
        <dbReference type="PDB" id="5GOX"/>
    </source>
</evidence>
<organism>
    <name type="scientific">Homo sapiens</name>
    <name type="common">Human</name>
    <dbReference type="NCBI Taxonomy" id="9606"/>
    <lineage>
        <taxon>Eukaryota</taxon>
        <taxon>Metazoa</taxon>
        <taxon>Chordata</taxon>
        <taxon>Craniata</taxon>
        <taxon>Vertebrata</taxon>
        <taxon>Euteleostomi</taxon>
        <taxon>Mammalia</taxon>
        <taxon>Eutheria</taxon>
        <taxon>Euarchontoglires</taxon>
        <taxon>Primates</taxon>
        <taxon>Haplorrhini</taxon>
        <taxon>Catarrhini</taxon>
        <taxon>Hominidae</taxon>
        <taxon>Homo</taxon>
    </lineage>
</organism>
<gene>
    <name evidence="39 44" type="primary">RAD50</name>
</gene>